<protein>
    <recommendedName>
        <fullName evidence="1">Small ribosomal subunit protein uS17</fullName>
    </recommendedName>
    <alternativeName>
        <fullName evidence="2">30S ribosomal protein S17</fullName>
    </alternativeName>
</protein>
<dbReference type="EMBL" id="AP009389">
    <property type="protein sequence ID" value="BAF58510.1"/>
    <property type="molecule type" value="Genomic_DNA"/>
</dbReference>
<dbReference type="SMR" id="A5D5G4"/>
<dbReference type="STRING" id="370438.PTH_0329"/>
<dbReference type="KEGG" id="pth:PTH_0329"/>
<dbReference type="eggNOG" id="COG0186">
    <property type="taxonomic scope" value="Bacteria"/>
</dbReference>
<dbReference type="HOGENOM" id="CLU_073626_1_0_9"/>
<dbReference type="Proteomes" id="UP000006556">
    <property type="component" value="Chromosome"/>
</dbReference>
<dbReference type="GO" id="GO:0022627">
    <property type="term" value="C:cytosolic small ribosomal subunit"/>
    <property type="evidence" value="ECO:0007669"/>
    <property type="project" value="TreeGrafter"/>
</dbReference>
<dbReference type="GO" id="GO:0019843">
    <property type="term" value="F:rRNA binding"/>
    <property type="evidence" value="ECO:0007669"/>
    <property type="project" value="UniProtKB-UniRule"/>
</dbReference>
<dbReference type="GO" id="GO:0003735">
    <property type="term" value="F:structural constituent of ribosome"/>
    <property type="evidence" value="ECO:0007669"/>
    <property type="project" value="InterPro"/>
</dbReference>
<dbReference type="GO" id="GO:0006412">
    <property type="term" value="P:translation"/>
    <property type="evidence" value="ECO:0007669"/>
    <property type="project" value="UniProtKB-UniRule"/>
</dbReference>
<dbReference type="CDD" id="cd00364">
    <property type="entry name" value="Ribosomal_uS17"/>
    <property type="match status" value="1"/>
</dbReference>
<dbReference type="FunFam" id="2.40.50.140:FF:000123">
    <property type="entry name" value="30S ribosomal protein S17"/>
    <property type="match status" value="1"/>
</dbReference>
<dbReference type="Gene3D" id="2.40.50.140">
    <property type="entry name" value="Nucleic acid-binding proteins"/>
    <property type="match status" value="1"/>
</dbReference>
<dbReference type="HAMAP" id="MF_01345_B">
    <property type="entry name" value="Ribosomal_uS17_B"/>
    <property type="match status" value="1"/>
</dbReference>
<dbReference type="InterPro" id="IPR012340">
    <property type="entry name" value="NA-bd_OB-fold"/>
</dbReference>
<dbReference type="InterPro" id="IPR000266">
    <property type="entry name" value="Ribosomal_uS17"/>
</dbReference>
<dbReference type="InterPro" id="IPR019984">
    <property type="entry name" value="Ribosomal_uS17_bact/chlr"/>
</dbReference>
<dbReference type="NCBIfam" id="NF004123">
    <property type="entry name" value="PRK05610.1"/>
    <property type="match status" value="1"/>
</dbReference>
<dbReference type="NCBIfam" id="TIGR03635">
    <property type="entry name" value="uS17_bact"/>
    <property type="match status" value="1"/>
</dbReference>
<dbReference type="PANTHER" id="PTHR10744">
    <property type="entry name" value="40S RIBOSOMAL PROTEIN S11 FAMILY MEMBER"/>
    <property type="match status" value="1"/>
</dbReference>
<dbReference type="PANTHER" id="PTHR10744:SF1">
    <property type="entry name" value="SMALL RIBOSOMAL SUBUNIT PROTEIN US17M"/>
    <property type="match status" value="1"/>
</dbReference>
<dbReference type="Pfam" id="PF00366">
    <property type="entry name" value="Ribosomal_S17"/>
    <property type="match status" value="1"/>
</dbReference>
<dbReference type="PRINTS" id="PR00973">
    <property type="entry name" value="RIBOSOMALS17"/>
</dbReference>
<dbReference type="SUPFAM" id="SSF50249">
    <property type="entry name" value="Nucleic acid-binding proteins"/>
    <property type="match status" value="1"/>
</dbReference>
<keyword id="KW-1185">Reference proteome</keyword>
<keyword id="KW-0687">Ribonucleoprotein</keyword>
<keyword id="KW-0689">Ribosomal protein</keyword>
<keyword id="KW-0694">RNA-binding</keyword>
<keyword id="KW-0699">rRNA-binding</keyword>
<evidence type="ECO:0000255" key="1">
    <source>
        <dbReference type="HAMAP-Rule" id="MF_01345"/>
    </source>
</evidence>
<evidence type="ECO:0000305" key="2"/>
<organism>
    <name type="scientific">Pelotomaculum thermopropionicum (strain DSM 13744 / JCM 10971 / SI)</name>
    <dbReference type="NCBI Taxonomy" id="370438"/>
    <lineage>
        <taxon>Bacteria</taxon>
        <taxon>Bacillati</taxon>
        <taxon>Bacillota</taxon>
        <taxon>Clostridia</taxon>
        <taxon>Eubacteriales</taxon>
        <taxon>Desulfotomaculaceae</taxon>
        <taxon>Pelotomaculum</taxon>
    </lineage>
</organism>
<comment type="function">
    <text evidence="1">One of the primary rRNA binding proteins, it binds specifically to the 5'-end of 16S ribosomal RNA.</text>
</comment>
<comment type="subunit">
    <text evidence="1">Part of the 30S ribosomal subunit.</text>
</comment>
<comment type="similarity">
    <text evidence="1">Belongs to the universal ribosomal protein uS17 family.</text>
</comment>
<gene>
    <name evidence="1" type="primary">rpsQ</name>
    <name type="ordered locus">PTH_0329</name>
</gene>
<sequence length="87" mass="10305">MEGRGIRKTLTGRVVSNKMDKTVVVAVETLVRHPLYQRTIRRTKKFKAHDEENACRIGDKVKMMETRPLSKEKRWRVVEILERTKQI</sequence>
<reference key="1">
    <citation type="journal article" date="2008" name="Genome Res.">
        <title>The genome of Pelotomaculum thermopropionicum reveals niche-associated evolution in anaerobic microbiota.</title>
        <authorList>
            <person name="Kosaka T."/>
            <person name="Kato S."/>
            <person name="Shimoyama T."/>
            <person name="Ishii S."/>
            <person name="Abe T."/>
            <person name="Watanabe K."/>
        </authorList>
    </citation>
    <scope>NUCLEOTIDE SEQUENCE [LARGE SCALE GENOMIC DNA]</scope>
    <source>
        <strain>DSM 13744 / JCM 10971 / SI</strain>
    </source>
</reference>
<feature type="chain" id="PRO_1000086847" description="Small ribosomal subunit protein uS17">
    <location>
        <begin position="1"/>
        <end position="87"/>
    </location>
</feature>
<accession>A5D5G4</accession>
<proteinExistence type="inferred from homology"/>
<name>RS17_PELTS</name>